<feature type="chain" id="PRO_1000148951" description="1-(5-phosphoribosyl)-5-[(5-phosphoribosylamino)methylideneamino] imidazole-4-carboxamide isomerase">
    <location>
        <begin position="1"/>
        <end position="239"/>
    </location>
</feature>
<feature type="active site" description="Proton acceptor" evidence="1">
    <location>
        <position position="8"/>
    </location>
</feature>
<feature type="active site" description="Proton donor" evidence="1">
    <location>
        <position position="129"/>
    </location>
</feature>
<protein>
    <recommendedName>
        <fullName evidence="1">1-(5-phosphoribosyl)-5-[(5-phosphoribosylamino)methylideneamino] imidazole-4-carboxamide isomerase</fullName>
        <ecNumber evidence="1">5.3.1.16</ecNumber>
    </recommendedName>
    <alternativeName>
        <fullName evidence="1">Phosphoribosylformimino-5-aminoimidazole carboxamide ribotide isomerase</fullName>
    </alternativeName>
</protein>
<keyword id="KW-0028">Amino-acid biosynthesis</keyword>
<keyword id="KW-0963">Cytoplasm</keyword>
<keyword id="KW-0368">Histidine biosynthesis</keyword>
<keyword id="KW-0413">Isomerase</keyword>
<gene>
    <name evidence="1" type="primary">hisA</name>
    <name type="ordered locus">BCA_1464</name>
</gene>
<dbReference type="EC" id="5.3.1.16" evidence="1"/>
<dbReference type="EMBL" id="CP001407">
    <property type="protein sequence ID" value="ACO26013.1"/>
    <property type="molecule type" value="Genomic_DNA"/>
</dbReference>
<dbReference type="RefSeq" id="WP_000402284.1">
    <property type="nucleotide sequence ID" value="NZ_CP009318.1"/>
</dbReference>
<dbReference type="SMR" id="C1EMQ6"/>
<dbReference type="KEGG" id="bcx:BCA_1464"/>
<dbReference type="PATRIC" id="fig|572264.18.peg.1414"/>
<dbReference type="UniPathway" id="UPA00031">
    <property type="reaction ID" value="UER00009"/>
</dbReference>
<dbReference type="Proteomes" id="UP000002210">
    <property type="component" value="Chromosome"/>
</dbReference>
<dbReference type="GO" id="GO:0005737">
    <property type="term" value="C:cytoplasm"/>
    <property type="evidence" value="ECO:0007669"/>
    <property type="project" value="UniProtKB-SubCell"/>
</dbReference>
<dbReference type="GO" id="GO:0003949">
    <property type="term" value="F:1-(5-phosphoribosyl)-5-[(5-phosphoribosylamino)methylideneamino]imidazole-4-carboxamide isomerase activity"/>
    <property type="evidence" value="ECO:0007669"/>
    <property type="project" value="UniProtKB-UniRule"/>
</dbReference>
<dbReference type="GO" id="GO:0000105">
    <property type="term" value="P:L-histidine biosynthetic process"/>
    <property type="evidence" value="ECO:0007669"/>
    <property type="project" value="UniProtKB-UniRule"/>
</dbReference>
<dbReference type="GO" id="GO:0000162">
    <property type="term" value="P:L-tryptophan biosynthetic process"/>
    <property type="evidence" value="ECO:0007669"/>
    <property type="project" value="TreeGrafter"/>
</dbReference>
<dbReference type="CDD" id="cd04732">
    <property type="entry name" value="HisA"/>
    <property type="match status" value="1"/>
</dbReference>
<dbReference type="FunFam" id="3.20.20.70:FF:000009">
    <property type="entry name" value="1-(5-phosphoribosyl)-5-[(5-phosphoribosylamino)methylideneamino] imidazole-4-carboxamide isomerase"/>
    <property type="match status" value="1"/>
</dbReference>
<dbReference type="Gene3D" id="3.20.20.70">
    <property type="entry name" value="Aldolase class I"/>
    <property type="match status" value="1"/>
</dbReference>
<dbReference type="HAMAP" id="MF_01014">
    <property type="entry name" value="HisA"/>
    <property type="match status" value="1"/>
</dbReference>
<dbReference type="InterPro" id="IPR013785">
    <property type="entry name" value="Aldolase_TIM"/>
</dbReference>
<dbReference type="InterPro" id="IPR006062">
    <property type="entry name" value="His_biosynth"/>
</dbReference>
<dbReference type="InterPro" id="IPR006063">
    <property type="entry name" value="HisA_bact_arch"/>
</dbReference>
<dbReference type="InterPro" id="IPR044524">
    <property type="entry name" value="Isoase_HisA-like"/>
</dbReference>
<dbReference type="InterPro" id="IPR023016">
    <property type="entry name" value="Isoase_HisA-like_bact"/>
</dbReference>
<dbReference type="InterPro" id="IPR011060">
    <property type="entry name" value="RibuloseP-bd_barrel"/>
</dbReference>
<dbReference type="NCBIfam" id="TIGR00007">
    <property type="entry name" value="1-(5-phosphoribosyl)-5-[(5-phosphoribosylamino)methylideneamino]imidazole-4-carboxamide isomerase"/>
    <property type="match status" value="1"/>
</dbReference>
<dbReference type="PANTHER" id="PTHR43090">
    <property type="entry name" value="1-(5-PHOSPHORIBOSYL)-5-[(5-PHOSPHORIBOSYLAMINO)METHYLIDENEAMINO] IMIDAZOLE-4-CARBOXAMIDE ISOMERASE"/>
    <property type="match status" value="1"/>
</dbReference>
<dbReference type="PANTHER" id="PTHR43090:SF2">
    <property type="entry name" value="1-(5-PHOSPHORIBOSYL)-5-[(5-PHOSPHORIBOSYLAMINO)METHYLIDENEAMINO] IMIDAZOLE-4-CARBOXAMIDE ISOMERASE"/>
    <property type="match status" value="1"/>
</dbReference>
<dbReference type="Pfam" id="PF00977">
    <property type="entry name" value="His_biosynth"/>
    <property type="match status" value="1"/>
</dbReference>
<dbReference type="SUPFAM" id="SSF51366">
    <property type="entry name" value="Ribulose-phoshate binding barrel"/>
    <property type="match status" value="1"/>
</dbReference>
<proteinExistence type="inferred from homology"/>
<evidence type="ECO:0000255" key="1">
    <source>
        <dbReference type="HAMAP-Rule" id="MF_01014"/>
    </source>
</evidence>
<reference key="1">
    <citation type="submission" date="2009-02" db="EMBL/GenBank/DDBJ databases">
        <title>Genome sequence of Bacillus cereus 03BB102.</title>
        <authorList>
            <person name="Dodson R.J."/>
            <person name="Jackson P."/>
            <person name="Munk A.C."/>
            <person name="Brettin T."/>
            <person name="Bruce D."/>
            <person name="Detter C."/>
            <person name="Tapia R."/>
            <person name="Han C."/>
            <person name="Sutton G."/>
            <person name="Sims D."/>
        </authorList>
    </citation>
    <scope>NUCLEOTIDE SEQUENCE [LARGE SCALE GENOMIC DNA]</scope>
    <source>
        <strain>03BB102</strain>
    </source>
</reference>
<name>HIS4_BACC3</name>
<comment type="catalytic activity">
    <reaction evidence="1">
        <text>1-(5-phospho-beta-D-ribosyl)-5-[(5-phospho-beta-D-ribosylamino)methylideneamino]imidazole-4-carboxamide = 5-[(5-phospho-1-deoxy-D-ribulos-1-ylimino)methylamino]-1-(5-phospho-beta-D-ribosyl)imidazole-4-carboxamide</text>
        <dbReference type="Rhea" id="RHEA:15469"/>
        <dbReference type="ChEBI" id="CHEBI:58435"/>
        <dbReference type="ChEBI" id="CHEBI:58525"/>
        <dbReference type="EC" id="5.3.1.16"/>
    </reaction>
</comment>
<comment type="pathway">
    <text evidence="1">Amino-acid biosynthesis; L-histidine biosynthesis; L-histidine from 5-phospho-alpha-D-ribose 1-diphosphate: step 4/9.</text>
</comment>
<comment type="subcellular location">
    <subcellularLocation>
        <location evidence="1">Cytoplasm</location>
    </subcellularLocation>
</comment>
<comment type="similarity">
    <text evidence="1">Belongs to the HisA/HisF family.</text>
</comment>
<accession>C1EMQ6</accession>
<organism>
    <name type="scientific">Bacillus cereus (strain 03BB102)</name>
    <dbReference type="NCBI Taxonomy" id="572264"/>
    <lineage>
        <taxon>Bacteria</taxon>
        <taxon>Bacillati</taxon>
        <taxon>Bacillota</taxon>
        <taxon>Bacilli</taxon>
        <taxon>Bacillales</taxon>
        <taxon>Bacillaceae</taxon>
        <taxon>Bacillus</taxon>
        <taxon>Bacillus cereus group</taxon>
    </lineage>
</organism>
<sequence>MEIFPAIDLKEGRCVRLYQGEFSKETVMNEDPVAQAIIFEKFGAKRLHIVDLDGAVAGESLNLSVIERICKAVRIPVQVGGGIRSLVAVEKLFSVGVDKVILGTAALYDKTFLEEAVLLYKEKIIVGIDAKNGFVATRGWLDVSEISYIDLAKQMENIGVQTIVFTDISKDGTLAGPNIGQLELLQKSVAIRLIASGGVASIQDVKKLNDMNIYGVIIGKALYEKTIDLEEVLEVTKLC</sequence>